<feature type="signal peptide" evidence="2">
    <location>
        <begin position="1"/>
        <end position="21"/>
    </location>
</feature>
<feature type="chain" id="PRO_5003054590" description="Probable 6-phosphogluconolactonase ARB_02015">
    <location>
        <begin position="22"/>
        <end position="394"/>
    </location>
</feature>
<feature type="glycosylation site" description="N-linked (GlcNAc...) asparagine" evidence="3">
    <location>
        <position position="51"/>
    </location>
</feature>
<keyword id="KW-0119">Carbohydrate metabolism</keyword>
<keyword id="KW-0313">Glucose metabolism</keyword>
<keyword id="KW-0325">Glycoprotein</keyword>
<keyword id="KW-0378">Hydrolase</keyword>
<keyword id="KW-1185">Reference proteome</keyword>
<keyword id="KW-0964">Secreted</keyword>
<keyword id="KW-0732">Signal</keyword>
<dbReference type="EC" id="3.1.1.31" evidence="1"/>
<dbReference type="EMBL" id="ABSU01000024">
    <property type="protein sequence ID" value="EFE31146.1"/>
    <property type="molecule type" value="Genomic_DNA"/>
</dbReference>
<dbReference type="RefSeq" id="XP_003011786.1">
    <property type="nucleotide sequence ID" value="XM_003011740.1"/>
</dbReference>
<dbReference type="SMR" id="D4B0N9"/>
<dbReference type="GeneID" id="9523559"/>
<dbReference type="KEGG" id="abe:ARB_02015"/>
<dbReference type="eggNOG" id="ENOG502S3WY">
    <property type="taxonomic scope" value="Eukaryota"/>
</dbReference>
<dbReference type="HOGENOM" id="CLU_038716_0_1_1"/>
<dbReference type="OMA" id="FVWTATR"/>
<dbReference type="OrthoDB" id="9972196at2759"/>
<dbReference type="UniPathway" id="UPA00115">
    <property type="reaction ID" value="UER00409"/>
</dbReference>
<dbReference type="Proteomes" id="UP000008866">
    <property type="component" value="Unassembled WGS sequence"/>
</dbReference>
<dbReference type="GO" id="GO:0005576">
    <property type="term" value="C:extracellular region"/>
    <property type="evidence" value="ECO:0007669"/>
    <property type="project" value="UniProtKB-SubCell"/>
</dbReference>
<dbReference type="GO" id="GO:0017057">
    <property type="term" value="F:6-phosphogluconolactonase activity"/>
    <property type="evidence" value="ECO:0007669"/>
    <property type="project" value="UniProtKB-EC"/>
</dbReference>
<dbReference type="GO" id="GO:0006006">
    <property type="term" value="P:glucose metabolic process"/>
    <property type="evidence" value="ECO:0007669"/>
    <property type="project" value="UniProtKB-KW"/>
</dbReference>
<dbReference type="GO" id="GO:0006098">
    <property type="term" value="P:pentose-phosphate shunt"/>
    <property type="evidence" value="ECO:0007669"/>
    <property type="project" value="UniProtKB-UniPathway"/>
</dbReference>
<dbReference type="Gene3D" id="2.130.10.10">
    <property type="entry name" value="YVTN repeat-like/Quinoprotein amine dehydrogenase"/>
    <property type="match status" value="1"/>
</dbReference>
<dbReference type="InterPro" id="IPR050282">
    <property type="entry name" value="Cycloisomerase_2"/>
</dbReference>
<dbReference type="InterPro" id="IPR011048">
    <property type="entry name" value="Haem_d1_sf"/>
</dbReference>
<dbReference type="InterPro" id="IPR019405">
    <property type="entry name" value="Lactonase_7-beta_prop"/>
</dbReference>
<dbReference type="InterPro" id="IPR015943">
    <property type="entry name" value="WD40/YVTN_repeat-like_dom_sf"/>
</dbReference>
<dbReference type="PANTHER" id="PTHR30344:SF1">
    <property type="entry name" value="6-PHOSPHOGLUCONOLACTONASE"/>
    <property type="match status" value="1"/>
</dbReference>
<dbReference type="PANTHER" id="PTHR30344">
    <property type="entry name" value="6-PHOSPHOGLUCONOLACTONASE-RELATED"/>
    <property type="match status" value="1"/>
</dbReference>
<dbReference type="Pfam" id="PF10282">
    <property type="entry name" value="Lactonase"/>
    <property type="match status" value="1"/>
</dbReference>
<dbReference type="SUPFAM" id="SSF51004">
    <property type="entry name" value="C-terminal (heme d1) domain of cytochrome cd1-nitrite reductase"/>
    <property type="match status" value="1"/>
</dbReference>
<protein>
    <recommendedName>
        <fullName evidence="5">Probable 6-phosphogluconolactonase ARB_02015</fullName>
        <ecNumber evidence="1">3.1.1.31</ecNumber>
    </recommendedName>
</protein>
<gene>
    <name type="ORF">ARB_02015</name>
</gene>
<name>6PGL_ARTBC</name>
<reference key="1">
    <citation type="journal article" date="2011" name="Genome Biol.">
        <title>Comparative and functional genomics provide insights into the pathogenicity of dermatophytic fungi.</title>
        <authorList>
            <person name="Burmester A."/>
            <person name="Shelest E."/>
            <person name="Gloeckner G."/>
            <person name="Heddergott C."/>
            <person name="Schindler S."/>
            <person name="Staib P."/>
            <person name="Heidel A."/>
            <person name="Felder M."/>
            <person name="Petzold A."/>
            <person name="Szafranski K."/>
            <person name="Feuermann M."/>
            <person name="Pedruzzi I."/>
            <person name="Priebe S."/>
            <person name="Groth M."/>
            <person name="Winkler R."/>
            <person name="Li W."/>
            <person name="Kniemeyer O."/>
            <person name="Schroeckh V."/>
            <person name="Hertweck C."/>
            <person name="Hube B."/>
            <person name="White T.C."/>
            <person name="Platzer M."/>
            <person name="Guthke R."/>
            <person name="Heitman J."/>
            <person name="Woestemeyer J."/>
            <person name="Zipfel P.F."/>
            <person name="Monod M."/>
            <person name="Brakhage A.A."/>
        </authorList>
    </citation>
    <scope>NUCLEOTIDE SEQUENCE [LARGE SCALE GENOMIC DNA]</scope>
    <source>
        <strain>ATCC MYA-4681 / CBS 112371</strain>
    </source>
</reference>
<reference key="2">
    <citation type="journal article" date="2011" name="Proteomics">
        <title>Identification of novel secreted proteases during extracellular proteolysis by dermatophytes at acidic pH.</title>
        <authorList>
            <person name="Sriranganadane D."/>
            <person name="Waridel P."/>
            <person name="Salamin K."/>
            <person name="Feuermann M."/>
            <person name="Mignon B."/>
            <person name="Staib P."/>
            <person name="Neuhaus J.M."/>
            <person name="Quadroni M."/>
            <person name="Monod M."/>
        </authorList>
    </citation>
    <scope>IDENTIFICATION BY MASS SPECTROMETRY</scope>
    <scope>SUBCELLULAR LOCATION</scope>
</reference>
<comment type="function">
    <text evidence="1">Catalyzes the hydrolysis of 6-phosphogluconolactone to 6-phosphogluconate.</text>
</comment>
<comment type="catalytic activity">
    <reaction evidence="1">
        <text>6-phospho-D-glucono-1,5-lactone + H2O = 6-phospho-D-gluconate + H(+)</text>
        <dbReference type="Rhea" id="RHEA:12556"/>
        <dbReference type="ChEBI" id="CHEBI:15377"/>
        <dbReference type="ChEBI" id="CHEBI:15378"/>
        <dbReference type="ChEBI" id="CHEBI:57955"/>
        <dbReference type="ChEBI" id="CHEBI:58759"/>
        <dbReference type="EC" id="3.1.1.31"/>
    </reaction>
</comment>
<comment type="pathway">
    <text evidence="5">Carbohydrate degradation; pentose phosphate pathway; D-ribulose 5-phosphate from D-glucose 6-phosphate (oxidative stage): step 2/3.</text>
</comment>
<comment type="subcellular location">
    <subcellularLocation>
        <location evidence="4">Secreted</location>
    </subcellularLocation>
</comment>
<comment type="similarity">
    <text evidence="5">Belongs to the cycloisomerase 2 family.</text>
</comment>
<evidence type="ECO:0000250" key="1">
    <source>
        <dbReference type="UniProtKB" id="O34499"/>
    </source>
</evidence>
<evidence type="ECO:0000255" key="2"/>
<evidence type="ECO:0000255" key="3">
    <source>
        <dbReference type="PROSITE-ProRule" id="PRU00498"/>
    </source>
</evidence>
<evidence type="ECO:0000269" key="4">
    <source>
    </source>
</evidence>
<evidence type="ECO:0000305" key="5"/>
<sequence length="394" mass="42509">MKTVPFLSLLQAGILTSGIVAQNIAFVGSNANAIATVSFDTKTGTFKVTGNNTDSSTPSWQEVSRDGKLLYSIEETSTEHALTSYSIGQDGKLKKLKSIKGLAGPVSLDMHPTQPIIITANYGSASASAYSSKDNGELTHLGDFMFKMQGKGKVPDRQDAPHPHQALFDPTGKFVLMPDLGSDLIRILKVDAGQKFSVAPPNKVKPGTGPRHGVLYPASDKPRFYYVVGELSNTVTAMSVEYTVETIKLTEIQTLSTLPDGQRGAAGELILSPSGKHLYASNRLDKVFPGSSSVASYTIDQMTGKLKLLEIFNGGVENIRHMSIHPSGKWFVTEGQNSNDIKVFALDPETGKVTPEAKSTLEIEKPVCLQWWHNGAQESEAPEAGTETECEFDD</sequence>
<accession>D4B0N9</accession>
<proteinExistence type="evidence at protein level"/>
<organism>
    <name type="scientific">Arthroderma benhamiae (strain ATCC MYA-4681 / CBS 112371)</name>
    <name type="common">Trichophyton mentagrophytes</name>
    <dbReference type="NCBI Taxonomy" id="663331"/>
    <lineage>
        <taxon>Eukaryota</taxon>
        <taxon>Fungi</taxon>
        <taxon>Dikarya</taxon>
        <taxon>Ascomycota</taxon>
        <taxon>Pezizomycotina</taxon>
        <taxon>Eurotiomycetes</taxon>
        <taxon>Eurotiomycetidae</taxon>
        <taxon>Onygenales</taxon>
        <taxon>Arthrodermataceae</taxon>
        <taxon>Trichophyton</taxon>
    </lineage>
</organism>